<organism>
    <name type="scientific">Homo sapiens</name>
    <name type="common">Human</name>
    <dbReference type="NCBI Taxonomy" id="9606"/>
    <lineage>
        <taxon>Eukaryota</taxon>
        <taxon>Metazoa</taxon>
        <taxon>Chordata</taxon>
        <taxon>Craniata</taxon>
        <taxon>Vertebrata</taxon>
        <taxon>Euteleostomi</taxon>
        <taxon>Mammalia</taxon>
        <taxon>Eutheria</taxon>
        <taxon>Euarchontoglires</taxon>
        <taxon>Primates</taxon>
        <taxon>Haplorrhini</taxon>
        <taxon>Catarrhini</taxon>
        <taxon>Hominidae</taxon>
        <taxon>Homo</taxon>
    </lineage>
</organism>
<accession>P28065</accession>
<accession>B0V0T1</accession>
<accession>Q16523</accession>
<accession>Q5JNW4</accession>
<dbReference type="EC" id="3.4.25.1"/>
<dbReference type="EMBL" id="X66401">
    <property type="protein sequence ID" value="CAA47024.1"/>
    <property type="molecule type" value="Genomic_DNA"/>
</dbReference>
<dbReference type="EMBL" id="X62741">
    <property type="protein sequence ID" value="CAA44603.1"/>
    <property type="molecule type" value="mRNA"/>
</dbReference>
<dbReference type="EMBL" id="Z14977">
    <property type="protein sequence ID" value="CAA78700.1"/>
    <property type="molecule type" value="Genomic_DNA"/>
</dbReference>
<dbReference type="EMBL" id="X87344">
    <property type="protein sequence ID" value="CAA60784.1"/>
    <property type="molecule type" value="Genomic_DNA"/>
</dbReference>
<dbReference type="EMBL" id="U01025">
    <property type="protein sequence ID" value="AAC50154.1"/>
    <property type="molecule type" value="mRNA"/>
</dbReference>
<dbReference type="EMBL" id="S75169">
    <property type="protein sequence ID" value="AAC60646.1"/>
    <property type="molecule type" value="mRNA"/>
</dbReference>
<dbReference type="EMBL" id="CR541656">
    <property type="protein sequence ID" value="CAG46457.1"/>
    <property type="molecule type" value="mRNA"/>
</dbReference>
<dbReference type="EMBL" id="AL669918">
    <property type="status" value="NOT_ANNOTATED_CDS"/>
    <property type="molecule type" value="Genomic_DNA"/>
</dbReference>
<dbReference type="EMBL" id="AL935043">
    <property type="status" value="NOT_ANNOTATED_CDS"/>
    <property type="molecule type" value="Genomic_DNA"/>
</dbReference>
<dbReference type="EMBL" id="BX088556">
    <property type="status" value="NOT_ANNOTATED_CDS"/>
    <property type="molecule type" value="Genomic_DNA"/>
</dbReference>
<dbReference type="EMBL" id="BX927138">
    <property type="status" value="NOT_ANNOTATED_CDS"/>
    <property type="molecule type" value="Genomic_DNA"/>
</dbReference>
<dbReference type="EMBL" id="CR753889">
    <property type="status" value="NOT_ANNOTATED_CDS"/>
    <property type="molecule type" value="Genomic_DNA"/>
</dbReference>
<dbReference type="EMBL" id="CR762476">
    <property type="status" value="NOT_ANNOTATED_CDS"/>
    <property type="molecule type" value="Genomic_DNA"/>
</dbReference>
<dbReference type="EMBL" id="CR933844">
    <property type="status" value="NOT_ANNOTATED_CDS"/>
    <property type="molecule type" value="Genomic_DNA"/>
</dbReference>
<dbReference type="EMBL" id="CH471081">
    <property type="protein sequence ID" value="EAX03654.1"/>
    <property type="molecule type" value="Genomic_DNA"/>
</dbReference>
<dbReference type="EMBL" id="BC065513">
    <property type="protein sequence ID" value="AAH65513.1"/>
    <property type="molecule type" value="mRNA"/>
</dbReference>
<dbReference type="CCDS" id="CCDS4759.1">
    <molecule id="P28065-1"/>
</dbReference>
<dbReference type="PIR" id="A55632">
    <property type="entry name" value="A55632"/>
</dbReference>
<dbReference type="PIR" id="S27332">
    <property type="entry name" value="S27332"/>
</dbReference>
<dbReference type="RefSeq" id="NP_002791.1">
    <molecule id="P28065-1"/>
    <property type="nucleotide sequence ID" value="NM_002800.5"/>
</dbReference>
<dbReference type="PDB" id="6AVO">
    <property type="method" value="EM"/>
    <property type="resolution" value="3.80 A"/>
    <property type="chains" value="A/F=21-219"/>
</dbReference>
<dbReference type="PDB" id="6E5B">
    <property type="method" value="X-ray"/>
    <property type="resolution" value="2.77 A"/>
    <property type="chains" value="N/b=1-219"/>
</dbReference>
<dbReference type="PDB" id="7AWE">
    <property type="method" value="X-ray"/>
    <property type="resolution" value="2.29 A"/>
    <property type="chains" value="H/V=21-219"/>
</dbReference>
<dbReference type="PDB" id="7B12">
    <property type="method" value="X-ray"/>
    <property type="resolution" value="2.43 A"/>
    <property type="chains" value="H/V=21-219"/>
</dbReference>
<dbReference type="PDB" id="9FST">
    <property type="method" value="X-ray"/>
    <property type="resolution" value="2.75 A"/>
    <property type="chains" value="N/b=22-71"/>
</dbReference>
<dbReference type="PDBsum" id="6AVO"/>
<dbReference type="PDBsum" id="6E5B"/>
<dbReference type="PDBsum" id="7AWE"/>
<dbReference type="PDBsum" id="7B12"/>
<dbReference type="PDBsum" id="9FST"/>
<dbReference type="EMDB" id="EMD-60139"/>
<dbReference type="EMDB" id="EMD-7010"/>
<dbReference type="SMR" id="P28065"/>
<dbReference type="BioGRID" id="111671">
    <property type="interactions" value="100"/>
</dbReference>
<dbReference type="ComplexPortal" id="CPX-9003">
    <property type="entry name" value="20S immunoproteasome complex"/>
</dbReference>
<dbReference type="ComplexPortal" id="CPX-9004">
    <property type="entry name" value="20S thymoproteasome complex"/>
</dbReference>
<dbReference type="FunCoup" id="P28065">
    <property type="interactions" value="416"/>
</dbReference>
<dbReference type="IntAct" id="P28065">
    <property type="interactions" value="73"/>
</dbReference>
<dbReference type="MINT" id="P28065"/>
<dbReference type="STRING" id="9606.ENSP00000363993"/>
<dbReference type="BindingDB" id="P28065"/>
<dbReference type="ChEMBL" id="CHEMBL1944495"/>
<dbReference type="DrugBank" id="DB08889">
    <property type="generic name" value="Carfilzomib"/>
</dbReference>
<dbReference type="DrugCentral" id="P28065"/>
<dbReference type="GuidetoPHARMACOLOGY" id="2409"/>
<dbReference type="MEROPS" id="T01.013"/>
<dbReference type="GlyGen" id="P28065">
    <property type="glycosylation" value="1 site, 1 O-linked glycan (1 site)"/>
</dbReference>
<dbReference type="iPTMnet" id="P28065"/>
<dbReference type="PhosphoSitePlus" id="P28065"/>
<dbReference type="BioMuta" id="PSMB9"/>
<dbReference type="DMDM" id="417529"/>
<dbReference type="OGP" id="P28065"/>
<dbReference type="jPOST" id="P28065"/>
<dbReference type="MassIVE" id="P28065"/>
<dbReference type="PaxDb" id="9606-ENSP00000363993"/>
<dbReference type="PeptideAtlas" id="P28065"/>
<dbReference type="ProteomicsDB" id="54439">
    <molecule id="P28065-1"/>
</dbReference>
<dbReference type="ProteomicsDB" id="54440">
    <molecule id="P28065-2"/>
</dbReference>
<dbReference type="Pumba" id="P28065"/>
<dbReference type="Antibodypedia" id="28726">
    <property type="antibodies" value="453 antibodies from 37 providers"/>
</dbReference>
<dbReference type="DNASU" id="5698"/>
<dbReference type="Ensembl" id="ENST00000374859.3">
    <molecule id="P28065-1"/>
    <property type="protein sequence ID" value="ENSP00000363993.2"/>
    <property type="gene ID" value="ENSG00000240065.9"/>
</dbReference>
<dbReference type="Ensembl" id="ENST00000383114.8">
    <molecule id="P28065-1"/>
    <property type="protein sequence ID" value="ENSP00000372595.4"/>
    <property type="gene ID" value="ENSG00000240118.7"/>
</dbReference>
<dbReference type="Ensembl" id="ENST00000383234.8">
    <molecule id="P28065-1"/>
    <property type="protein sequence ID" value="ENSP00000372721.4"/>
    <property type="gene ID" value="ENSG00000243594.7"/>
</dbReference>
<dbReference type="Ensembl" id="ENST00000422729.6">
    <molecule id="P28065-1"/>
    <property type="protein sequence ID" value="ENSP00000407233.2"/>
    <property type="gene ID" value="ENSG00000243067.7"/>
</dbReference>
<dbReference type="Ensembl" id="ENST00000427870.6">
    <property type="protein sequence ID" value="ENSP00000412027.2"/>
    <property type="gene ID" value="ENSG00000242711.8"/>
</dbReference>
<dbReference type="Ensembl" id="ENST00000434471.6">
    <property type="protein sequence ID" value="ENSP00000393744.2"/>
    <property type="gene ID" value="ENSG00000243958.7"/>
</dbReference>
<dbReference type="Ensembl" id="ENST00000444284.6">
    <molecule id="P28065-1"/>
    <property type="protein sequence ID" value="ENSP00000396813.2"/>
    <property type="gene ID" value="ENSG00000239836.7"/>
</dbReference>
<dbReference type="Ensembl" id="ENST00000453059.6">
    <property type="protein sequence ID" value="ENSP00000407810.2"/>
    <property type="gene ID" value="ENSG00000240508.7"/>
</dbReference>
<dbReference type="GeneID" id="5698"/>
<dbReference type="KEGG" id="hsa:5698"/>
<dbReference type="MANE-Select" id="ENST00000374859.3">
    <property type="protein sequence ID" value="ENSP00000363993.2"/>
    <property type="RefSeq nucleotide sequence ID" value="NM_002800.5"/>
    <property type="RefSeq protein sequence ID" value="NP_002791.1"/>
</dbReference>
<dbReference type="UCSC" id="uc003sga.4">
    <molecule id="P28065-1"/>
    <property type="organism name" value="human"/>
</dbReference>
<dbReference type="AGR" id="HGNC:9546"/>
<dbReference type="CTD" id="5698"/>
<dbReference type="DisGeNET" id="5698"/>
<dbReference type="GeneCards" id="PSMB9"/>
<dbReference type="HGNC" id="HGNC:9546">
    <property type="gene designation" value="PSMB9"/>
</dbReference>
<dbReference type="HPA" id="ENSG00000240065">
    <property type="expression patterns" value="Tissue enhanced (lymphoid)"/>
</dbReference>
<dbReference type="MalaCards" id="PSMB9"/>
<dbReference type="MIM" id="177045">
    <property type="type" value="gene"/>
</dbReference>
<dbReference type="MIM" id="617591">
    <property type="type" value="phenotype"/>
</dbReference>
<dbReference type="MIM" id="620796">
    <property type="type" value="phenotype"/>
</dbReference>
<dbReference type="neXtProt" id="NX_P28065"/>
<dbReference type="OpenTargets" id="ENSG00000240065"/>
<dbReference type="PharmGKB" id="PA33891"/>
<dbReference type="VEuPathDB" id="HostDB:ENSG00000240065"/>
<dbReference type="eggNOG" id="KOG0174">
    <property type="taxonomic scope" value="Eukaryota"/>
</dbReference>
<dbReference type="GeneTree" id="ENSGT00940000159897"/>
<dbReference type="InParanoid" id="P28065"/>
<dbReference type="OMA" id="PWAGEVH"/>
<dbReference type="OrthoDB" id="7854943at2759"/>
<dbReference type="PAN-GO" id="P28065">
    <property type="GO annotations" value="4 GO annotations based on evolutionary models"/>
</dbReference>
<dbReference type="PhylomeDB" id="P28065"/>
<dbReference type="TreeFam" id="TF106221"/>
<dbReference type="PathwayCommons" id="P28065"/>
<dbReference type="Reactome" id="R-HSA-9907900">
    <property type="pathway name" value="Proteasome assembly"/>
</dbReference>
<dbReference type="SignaLink" id="P28065"/>
<dbReference type="SIGNOR" id="P28065"/>
<dbReference type="BioGRID-ORCS" id="5698">
    <property type="hits" value="16 hits in 1177 CRISPR screens"/>
</dbReference>
<dbReference type="GeneWiki" id="PSMB9"/>
<dbReference type="GenomeRNAi" id="5698"/>
<dbReference type="Pharos" id="P28065">
    <property type="development level" value="Tchem"/>
</dbReference>
<dbReference type="PRO" id="PR:P28065"/>
<dbReference type="Proteomes" id="UP000005640">
    <property type="component" value="Chromosome 6"/>
</dbReference>
<dbReference type="RNAct" id="P28065">
    <property type="molecule type" value="protein"/>
</dbReference>
<dbReference type="Bgee" id="ENSG00000240065">
    <property type="expression patterns" value="Expressed in granulocyte and 98 other cell types or tissues"/>
</dbReference>
<dbReference type="ExpressionAtlas" id="P28065">
    <property type="expression patterns" value="baseline and differential"/>
</dbReference>
<dbReference type="GO" id="GO:0005829">
    <property type="term" value="C:cytosol"/>
    <property type="evidence" value="ECO:0000314"/>
    <property type="project" value="HPA"/>
</dbReference>
<dbReference type="GO" id="GO:0070062">
    <property type="term" value="C:extracellular exosome"/>
    <property type="evidence" value="ECO:0007005"/>
    <property type="project" value="UniProtKB"/>
</dbReference>
<dbReference type="GO" id="GO:0005634">
    <property type="term" value="C:nucleus"/>
    <property type="evidence" value="ECO:0000318"/>
    <property type="project" value="GO_Central"/>
</dbReference>
<dbReference type="GO" id="GO:0000502">
    <property type="term" value="C:proteasome complex"/>
    <property type="evidence" value="ECO:0000304"/>
    <property type="project" value="ProtInc"/>
</dbReference>
<dbReference type="GO" id="GO:0005839">
    <property type="term" value="C:proteasome core complex"/>
    <property type="evidence" value="ECO:0000250"/>
    <property type="project" value="UniProtKB"/>
</dbReference>
<dbReference type="GO" id="GO:0019774">
    <property type="term" value="C:proteasome core complex, beta-subunit complex"/>
    <property type="evidence" value="ECO:0000250"/>
    <property type="project" value="UniProtKB"/>
</dbReference>
<dbReference type="GO" id="GO:1990111">
    <property type="term" value="C:spermatoproteasome complex"/>
    <property type="evidence" value="ECO:0000250"/>
    <property type="project" value="UniProtKB"/>
</dbReference>
<dbReference type="GO" id="GO:0004175">
    <property type="term" value="F:endopeptidase activity"/>
    <property type="evidence" value="ECO:0000318"/>
    <property type="project" value="GO_Central"/>
</dbReference>
<dbReference type="GO" id="GO:0004298">
    <property type="term" value="F:threonine-type endopeptidase activity"/>
    <property type="evidence" value="ECO:0007669"/>
    <property type="project" value="UniProtKB-KW"/>
</dbReference>
<dbReference type="GO" id="GO:0002376">
    <property type="term" value="P:immune system process"/>
    <property type="evidence" value="ECO:0007669"/>
    <property type="project" value="UniProtKB-KW"/>
</dbReference>
<dbReference type="GO" id="GO:0043161">
    <property type="term" value="P:proteasome-mediated ubiquitin-dependent protein catabolic process"/>
    <property type="evidence" value="ECO:0000315"/>
    <property type="project" value="UniProtKB"/>
</dbReference>
<dbReference type="CDD" id="cd03762">
    <property type="entry name" value="proteasome_beta_type_6"/>
    <property type="match status" value="1"/>
</dbReference>
<dbReference type="FunFam" id="3.60.20.10:FF:000010">
    <property type="entry name" value="Proteasome subunit beta type-1"/>
    <property type="match status" value="1"/>
</dbReference>
<dbReference type="Gene3D" id="3.60.20.10">
    <property type="entry name" value="Glutamine Phosphoribosylpyrophosphate, subunit 1, domain 1"/>
    <property type="match status" value="1"/>
</dbReference>
<dbReference type="InterPro" id="IPR029055">
    <property type="entry name" value="Ntn_hydrolases_N"/>
</dbReference>
<dbReference type="InterPro" id="IPR000243">
    <property type="entry name" value="Pept_T1A_subB"/>
</dbReference>
<dbReference type="InterPro" id="IPR016050">
    <property type="entry name" value="Proteasome_bsu_CS"/>
</dbReference>
<dbReference type="InterPro" id="IPR001353">
    <property type="entry name" value="Proteasome_sua/b"/>
</dbReference>
<dbReference type="InterPro" id="IPR023333">
    <property type="entry name" value="Proteasome_suB-type"/>
</dbReference>
<dbReference type="PANTHER" id="PTHR32194">
    <property type="entry name" value="METALLOPROTEASE TLDD"/>
    <property type="match status" value="1"/>
</dbReference>
<dbReference type="PANTHER" id="PTHR32194:SF12">
    <property type="entry name" value="PROTEASOME SUBUNIT BETA"/>
    <property type="match status" value="1"/>
</dbReference>
<dbReference type="Pfam" id="PF00227">
    <property type="entry name" value="Proteasome"/>
    <property type="match status" value="1"/>
</dbReference>
<dbReference type="PRINTS" id="PR00141">
    <property type="entry name" value="PROTEASOME"/>
</dbReference>
<dbReference type="SUPFAM" id="SSF56235">
    <property type="entry name" value="N-terminal nucleophile aminohydrolases (Ntn hydrolases)"/>
    <property type="match status" value="1"/>
</dbReference>
<dbReference type="PROSITE" id="PS00854">
    <property type="entry name" value="PROTEASOME_BETA_1"/>
    <property type="match status" value="1"/>
</dbReference>
<dbReference type="PROSITE" id="PS51476">
    <property type="entry name" value="PROTEASOME_BETA_2"/>
    <property type="match status" value="1"/>
</dbReference>
<reference key="1">
    <citation type="journal article" date="1993" name="Eur. J. Immunol.">
        <title>The major histocompatibility complex-encoded proteasome component LMP7: alternative first exons and post-translational processing.</title>
        <authorList>
            <person name="Glynne R."/>
            <person name="Kerr L.A."/>
            <person name="Mockridge I."/>
            <person name="Beck S."/>
            <person name="Kelly A."/>
            <person name="Trowsdale J."/>
        </authorList>
    </citation>
    <scope>NUCLEOTIDE SEQUENCE [GENOMIC DNA]</scope>
</reference>
<reference key="2">
    <citation type="journal article" date="1992" name="J. Mol. Biol.">
        <title>DNA sequence analysis of 66 kb of the human MHC class II region encoding a cluster of genes for antigen processing.</title>
        <authorList>
            <person name="Beck S."/>
            <person name="Kelly A."/>
            <person name="Radley E."/>
            <person name="Khurshid F."/>
            <person name="Alderton R.P."/>
            <person name="Trowsdale J."/>
        </authorList>
    </citation>
    <scope>NUCLEOTIDE SEQUENCE [GENOMIC DNA]</scope>
</reference>
<reference key="3">
    <citation type="journal article" date="1991" name="Nature">
        <title>Second proteasome-related gene in the human MHC class II region.</title>
        <authorList>
            <person name="Kelly A."/>
            <person name="Powis S.H."/>
            <person name="Glynne R."/>
            <person name="Radley E."/>
            <person name="Beck S."/>
            <person name="Trowsdale J."/>
        </authorList>
    </citation>
    <scope>NUCLEOTIDE SEQUENCE [MRNA] (ISOFORM LMP2.L)</scope>
    <scope>VARIANT HIS-60</scope>
</reference>
<reference key="4">
    <citation type="journal article" date="1992" name="J. Biol. Chem.">
        <title>Alternative exon usage and processing of the major histocompatibility complex-encoded proteasome subunits.</title>
        <authorList>
            <person name="Fruh K."/>
            <person name="Yang Y."/>
            <person name="Arnold D."/>
            <person name="Chambers J."/>
            <person name="Wu L."/>
            <person name="Waters J.B."/>
            <person name="Spies T."/>
            <person name="Peterson P.A."/>
        </authorList>
    </citation>
    <scope>NUCLEOTIDE SEQUENCE [GENOMIC DNA]</scope>
</reference>
<reference key="5">
    <citation type="journal article" date="1996" name="J. Mol. Biol.">
        <title>Evolutionary dynamics of non-coding sequences within the class II region of the human MHC.</title>
        <authorList>
            <person name="Beck S."/>
            <person name="Abdulla S."/>
            <person name="Alderton R.P."/>
            <person name="Glynne R.J."/>
            <person name="Gut I.G."/>
            <person name="Hosking L.K."/>
            <person name="Jackson A."/>
            <person name="Kelly A."/>
            <person name="Newell W.R."/>
            <person name="Sanseau P."/>
            <person name="Radley E."/>
            <person name="Thorpe K.L."/>
            <person name="Trowsdale J."/>
        </authorList>
    </citation>
    <scope>NUCLEOTIDE SEQUENCE [GENOMIC DNA]</scope>
</reference>
<reference key="6">
    <citation type="journal article" date="1995" name="J. Biol. Chem.">
        <title>Major histocompatibility-encoded human proteasome LMP2. Genomic organization and a new form of mRNA.</title>
        <authorList>
            <person name="Singal D.P."/>
            <person name="Ye M."/>
            <person name="Quadri S.A."/>
        </authorList>
    </citation>
    <scope>NUCLEOTIDE SEQUENCE [GENOMIC DNA / MRNA] (ISOFORMS LMP2.S AND LMP2.L)</scope>
</reference>
<reference key="7">
    <citation type="submission" date="2004-06" db="EMBL/GenBank/DDBJ databases">
        <title>Cloning of human full open reading frames in Gateway(TM) system entry vector (pDONR201).</title>
        <authorList>
            <person name="Ebert L."/>
            <person name="Schick M."/>
            <person name="Neubert P."/>
            <person name="Schatten R."/>
            <person name="Henze S."/>
            <person name="Korn B."/>
        </authorList>
    </citation>
    <scope>NUCLEOTIDE SEQUENCE [LARGE SCALE MRNA] (ISOFORM LMP2.L)</scope>
</reference>
<reference key="8">
    <citation type="journal article" date="2003" name="Nature">
        <title>The DNA sequence and analysis of human chromosome 6.</title>
        <authorList>
            <person name="Mungall A.J."/>
            <person name="Palmer S.A."/>
            <person name="Sims S.K."/>
            <person name="Edwards C.A."/>
            <person name="Ashurst J.L."/>
            <person name="Wilming L."/>
            <person name="Jones M.C."/>
            <person name="Horton R."/>
            <person name="Hunt S.E."/>
            <person name="Scott C.E."/>
            <person name="Gilbert J.G.R."/>
            <person name="Clamp M.E."/>
            <person name="Bethel G."/>
            <person name="Milne S."/>
            <person name="Ainscough R."/>
            <person name="Almeida J.P."/>
            <person name="Ambrose K.D."/>
            <person name="Andrews T.D."/>
            <person name="Ashwell R.I.S."/>
            <person name="Babbage A.K."/>
            <person name="Bagguley C.L."/>
            <person name="Bailey J."/>
            <person name="Banerjee R."/>
            <person name="Barker D.J."/>
            <person name="Barlow K.F."/>
            <person name="Bates K."/>
            <person name="Beare D.M."/>
            <person name="Beasley H."/>
            <person name="Beasley O."/>
            <person name="Bird C.P."/>
            <person name="Blakey S.E."/>
            <person name="Bray-Allen S."/>
            <person name="Brook J."/>
            <person name="Brown A.J."/>
            <person name="Brown J.Y."/>
            <person name="Burford D.C."/>
            <person name="Burrill W."/>
            <person name="Burton J."/>
            <person name="Carder C."/>
            <person name="Carter N.P."/>
            <person name="Chapman J.C."/>
            <person name="Clark S.Y."/>
            <person name="Clark G."/>
            <person name="Clee C.M."/>
            <person name="Clegg S."/>
            <person name="Cobley V."/>
            <person name="Collier R.E."/>
            <person name="Collins J.E."/>
            <person name="Colman L.K."/>
            <person name="Corby N.R."/>
            <person name="Coville G.J."/>
            <person name="Culley K.M."/>
            <person name="Dhami P."/>
            <person name="Davies J."/>
            <person name="Dunn M."/>
            <person name="Earthrowl M.E."/>
            <person name="Ellington A.E."/>
            <person name="Evans K.A."/>
            <person name="Faulkner L."/>
            <person name="Francis M.D."/>
            <person name="Frankish A."/>
            <person name="Frankland J."/>
            <person name="French L."/>
            <person name="Garner P."/>
            <person name="Garnett J."/>
            <person name="Ghori M.J."/>
            <person name="Gilby L.M."/>
            <person name="Gillson C.J."/>
            <person name="Glithero R.J."/>
            <person name="Grafham D.V."/>
            <person name="Grant M."/>
            <person name="Gribble S."/>
            <person name="Griffiths C."/>
            <person name="Griffiths M.N.D."/>
            <person name="Hall R."/>
            <person name="Halls K.S."/>
            <person name="Hammond S."/>
            <person name="Harley J.L."/>
            <person name="Hart E.A."/>
            <person name="Heath P.D."/>
            <person name="Heathcott R."/>
            <person name="Holmes S.J."/>
            <person name="Howden P.J."/>
            <person name="Howe K.L."/>
            <person name="Howell G.R."/>
            <person name="Huckle E."/>
            <person name="Humphray S.J."/>
            <person name="Humphries M.D."/>
            <person name="Hunt A.R."/>
            <person name="Johnson C.M."/>
            <person name="Joy A.A."/>
            <person name="Kay M."/>
            <person name="Keenan S.J."/>
            <person name="Kimberley A.M."/>
            <person name="King A."/>
            <person name="Laird G.K."/>
            <person name="Langford C."/>
            <person name="Lawlor S."/>
            <person name="Leongamornlert D.A."/>
            <person name="Leversha M."/>
            <person name="Lloyd C.R."/>
            <person name="Lloyd D.M."/>
            <person name="Loveland J.E."/>
            <person name="Lovell J."/>
            <person name="Martin S."/>
            <person name="Mashreghi-Mohammadi M."/>
            <person name="Maslen G.L."/>
            <person name="Matthews L."/>
            <person name="McCann O.T."/>
            <person name="McLaren S.J."/>
            <person name="McLay K."/>
            <person name="McMurray A."/>
            <person name="Moore M.J.F."/>
            <person name="Mullikin J.C."/>
            <person name="Niblett D."/>
            <person name="Nickerson T."/>
            <person name="Novik K.L."/>
            <person name="Oliver K."/>
            <person name="Overton-Larty E.K."/>
            <person name="Parker A."/>
            <person name="Patel R."/>
            <person name="Pearce A.V."/>
            <person name="Peck A.I."/>
            <person name="Phillimore B.J.C.T."/>
            <person name="Phillips S."/>
            <person name="Plumb R.W."/>
            <person name="Porter K.M."/>
            <person name="Ramsey Y."/>
            <person name="Ranby S.A."/>
            <person name="Rice C.M."/>
            <person name="Ross M.T."/>
            <person name="Searle S.M."/>
            <person name="Sehra H.K."/>
            <person name="Sheridan E."/>
            <person name="Skuce C.D."/>
            <person name="Smith S."/>
            <person name="Smith M."/>
            <person name="Spraggon L."/>
            <person name="Squares S.L."/>
            <person name="Steward C.A."/>
            <person name="Sycamore N."/>
            <person name="Tamlyn-Hall G."/>
            <person name="Tester J."/>
            <person name="Theaker A.J."/>
            <person name="Thomas D.W."/>
            <person name="Thorpe A."/>
            <person name="Tracey A."/>
            <person name="Tromans A."/>
            <person name="Tubby B."/>
            <person name="Wall M."/>
            <person name="Wallis J.M."/>
            <person name="West A.P."/>
            <person name="White S.S."/>
            <person name="Whitehead S.L."/>
            <person name="Whittaker H."/>
            <person name="Wild A."/>
            <person name="Willey D.J."/>
            <person name="Wilmer T.E."/>
            <person name="Wood J.M."/>
            <person name="Wray P.W."/>
            <person name="Wyatt J.C."/>
            <person name="Young L."/>
            <person name="Younger R.M."/>
            <person name="Bentley D.R."/>
            <person name="Coulson A."/>
            <person name="Durbin R.M."/>
            <person name="Hubbard T."/>
            <person name="Sulston J.E."/>
            <person name="Dunham I."/>
            <person name="Rogers J."/>
            <person name="Beck S."/>
        </authorList>
    </citation>
    <scope>NUCLEOTIDE SEQUENCE [LARGE SCALE GENOMIC DNA]</scope>
</reference>
<reference key="9">
    <citation type="submission" date="2005-07" db="EMBL/GenBank/DDBJ databases">
        <authorList>
            <person name="Mural R.J."/>
            <person name="Istrail S."/>
            <person name="Sutton G."/>
            <person name="Florea L."/>
            <person name="Halpern A.L."/>
            <person name="Mobarry C.M."/>
            <person name="Lippert R."/>
            <person name="Walenz B."/>
            <person name="Shatkay H."/>
            <person name="Dew I."/>
            <person name="Miller J.R."/>
            <person name="Flanigan M.J."/>
            <person name="Edwards N.J."/>
            <person name="Bolanos R."/>
            <person name="Fasulo D."/>
            <person name="Halldorsson B.V."/>
            <person name="Hannenhalli S."/>
            <person name="Turner R."/>
            <person name="Yooseph S."/>
            <person name="Lu F."/>
            <person name="Nusskern D.R."/>
            <person name="Shue B.C."/>
            <person name="Zheng X.H."/>
            <person name="Zhong F."/>
            <person name="Delcher A.L."/>
            <person name="Huson D.H."/>
            <person name="Kravitz S.A."/>
            <person name="Mouchard L."/>
            <person name="Reinert K."/>
            <person name="Remington K.A."/>
            <person name="Clark A.G."/>
            <person name="Waterman M.S."/>
            <person name="Eichler E.E."/>
            <person name="Adams M.D."/>
            <person name="Hunkapiller M.W."/>
            <person name="Myers E.W."/>
            <person name="Venter J.C."/>
        </authorList>
    </citation>
    <scope>NUCLEOTIDE SEQUENCE [LARGE SCALE GENOMIC DNA]</scope>
</reference>
<reference key="10">
    <citation type="journal article" date="2004" name="Genome Res.">
        <title>The status, quality, and expansion of the NIH full-length cDNA project: the Mammalian Gene Collection (MGC).</title>
        <authorList>
            <consortium name="The MGC Project Team"/>
        </authorList>
    </citation>
    <scope>NUCLEOTIDE SEQUENCE [LARGE SCALE MRNA] (ISOFORM LMP2.L)</scope>
    <source>
        <tissue>Pancreas</tissue>
    </source>
</reference>
<reference key="11">
    <citation type="journal article" date="1994" name="FEBS Lett.">
        <title>Replacement of proteasome subunits X and Y by LMP7 and LMP2 induced by interferon-gamma for acquirement of the functional diversity responsible for antigen processing.</title>
        <authorList>
            <person name="Akiyama K."/>
            <person name="Kagawa S."/>
            <person name="Tamura T."/>
            <person name="Shimbara N."/>
            <person name="Takashina M."/>
            <person name="Kristensen P."/>
            <person name="Hendil K.B."/>
            <person name="Tanaka K."/>
            <person name="Ichihara A."/>
        </authorList>
    </citation>
    <scope>FUNCTION</scope>
</reference>
<reference key="12">
    <citation type="journal article" date="1996" name="EMBO J.">
        <title>Analysis of mammalian 20S proteasome biogenesis: the maturation of beta-subunits is an ordered two-step mechanism involving autocatalysis.</title>
        <authorList>
            <person name="Schmidtke G."/>
            <person name="Kraft R."/>
            <person name="Kostka S."/>
            <person name="Henklein P."/>
            <person name="Froemmel C."/>
            <person name="Loewe J."/>
            <person name="Huber R."/>
            <person name="Kloetzel P.-M."/>
            <person name="Schmidt M."/>
        </authorList>
    </citation>
    <scope>MUTAGENESIS OF GLY-20; THR-21 AND LYS-53</scope>
    <scope>SELF ACTIVATION OF BETA-SUBUNITS MODEL</scope>
</reference>
<reference key="13">
    <citation type="journal article" date="1996" name="J. Biol. Chem.">
        <title>Proteasome subunits X and Y alter peptidase activities in opposite ways to the interferon-gamma-induced subunits LMP2 and LMP7.</title>
        <authorList>
            <person name="Gaczynska M."/>
            <person name="Goldberg A.L."/>
            <person name="Tanaka K."/>
            <person name="Hendil K.B."/>
            <person name="Rock K.L."/>
        </authorList>
    </citation>
    <scope>INDUCTION</scope>
</reference>
<reference key="14">
    <citation type="journal article" date="2001" name="Blood">
        <title>Tumor necrosis factor-alpha induces coordinated changes in major histocompatibility class I presentation pathway, resulting in increased stability of class I complexes at the cell surface.</title>
        <authorList>
            <person name="Hallermalm K."/>
            <person name="Seki K."/>
            <person name="Wei C."/>
            <person name="Castelli C."/>
            <person name="Rivoltini L."/>
            <person name="Kiessling R."/>
            <person name="Levitskaya J."/>
        </authorList>
    </citation>
    <scope>INDUCTION BY TNF AND IFNG</scope>
</reference>
<reference key="15">
    <citation type="journal article" date="2001" name="Int. Immunol.">
        <title>Bipartite regulation of different components of the MHC class I antigen-processing machinery during dendritic cell maturation.</title>
        <authorList>
            <person name="Li J."/>
            <person name="Schuler-Thurner B."/>
            <person name="Schuler G."/>
            <person name="Huber C."/>
            <person name="Seliger B."/>
        </authorList>
    </citation>
    <scope>DEVELOPMENTAL STAGE</scope>
</reference>
<reference key="16">
    <citation type="journal article" date="2003" name="FEBS Lett.">
        <title>Human immunodeficiency virus-1 Tat protein interacts with distinct proteasomal alpha and beta subunits.</title>
        <authorList>
            <person name="Apcher G.S."/>
            <person name="Heink S."/>
            <person name="Zantopf D."/>
            <person name="Kloetzel P.-M."/>
            <person name="Schmid H.-P."/>
            <person name="Mayer R.J."/>
            <person name="Krueger E."/>
        </authorList>
    </citation>
    <scope>INTERACTION WITH HIV-1 TAT (MICROBIAL INFECTION)</scope>
</reference>
<reference key="17">
    <citation type="journal article" date="2004" name="Toxicon">
        <title>Potential effects of tetrodotoxin exposure to human glial cells postulated using microarray approach.</title>
        <authorList>
            <person name="Raghavendra Prasad H.S."/>
            <person name="Qi Z."/>
            <person name="Srinivasan K.N."/>
            <person name="Gopalakrishnakone P."/>
        </authorList>
    </citation>
    <scope>INDUCTION BY TETRODOTOXIN</scope>
</reference>
<reference key="18">
    <citation type="journal article" date="2005" name="FEBS Lett.">
        <title>IRF-1 mediates upregulation of LMP7 by IFN-gamma and concerted expression of immunosubunits of the proteasome.</title>
        <authorList>
            <person name="Namiki S."/>
            <person name="Nakamura T."/>
            <person name="Oshima S."/>
            <person name="Yamazaki M."/>
            <person name="Sekine Y."/>
            <person name="Tsuchiya K."/>
            <person name="Okamoto R."/>
            <person name="Kanai T."/>
            <person name="Watanabe M."/>
        </authorList>
    </citation>
    <scope>INDUCTION BY IFNG AND IRF1</scope>
</reference>
<reference key="19">
    <citation type="journal article" date="2006" name="EMBO J.">
        <title>The catalytic subunit of the proteasome is engaged in the entire process of estrogen receptor-regulated transcription.</title>
        <authorList>
            <person name="Zhang H."/>
            <person name="Sun L."/>
            <person name="Liang J."/>
            <person name="Yu W."/>
            <person name="Zhang Y."/>
            <person name="Wang Y."/>
            <person name="Chen Y."/>
            <person name="Li R."/>
            <person name="Sun X."/>
            <person name="Shang Y."/>
        </authorList>
    </citation>
    <scope>INTERACTION WITH NCOA1; NCOA2 AND NCOA3</scope>
</reference>
<reference key="20">
    <citation type="journal article" date="2006" name="J. Immunol.">
        <title>Heat shock up-regulates lmp2 and lmp7 and enhances presentation of immunoproteasome-dependent epitopes.</title>
        <authorList>
            <person name="Callahan M.K."/>
            <person name="Wohlfert E.A."/>
            <person name="Menoret A."/>
            <person name="Srivastava P.K."/>
        </authorList>
    </citation>
    <scope>INDUCTION BY HEAT SHOCK</scope>
</reference>
<reference key="21">
    <citation type="journal article" date="2007" name="Inflamm. Bowel Dis.">
        <title>Genome-wide gene expression differences in Crohn's disease and ulcerative colitis from endoscopic pinch biopsies: insights into distinctive pathogenesis.</title>
        <authorList>
            <person name="Wu F."/>
            <person name="Dassopoulos T."/>
            <person name="Cope L."/>
            <person name="Maitra A."/>
            <person name="Brant S.R."/>
            <person name="Harris M.L."/>
            <person name="Bayless T.M."/>
            <person name="Parmigiani G."/>
            <person name="Chakravarti S."/>
        </authorList>
    </citation>
    <scope>INDUCTION</scope>
</reference>
<reference key="22">
    <citation type="journal article" date="2008" name="Mol. Cell. Biol.">
        <title>CD40 induces antigen transporter and immunoproteasome gene expression in carcinomas via the coordinated action of NF-kappaB and of NF-kappaB-mediated de novo synthesis of IRF-1.</title>
        <authorList>
            <person name="Moschonas A."/>
            <person name="Kouraki M."/>
            <person name="Knox P.G."/>
            <person name="Thymiakou E."/>
            <person name="Kardassis D."/>
            <person name="Eliopoulos A.G."/>
        </authorList>
    </citation>
    <scope>INDUCTION BY CD40L</scope>
</reference>
<reference key="23">
    <citation type="journal article" date="2009" name="Science">
        <title>Lysine acetylation targets protein complexes and co-regulates major cellular functions.</title>
        <authorList>
            <person name="Choudhary C."/>
            <person name="Kumar C."/>
            <person name="Gnad F."/>
            <person name="Nielsen M.L."/>
            <person name="Rehman M."/>
            <person name="Walther T.C."/>
            <person name="Olsen J.V."/>
            <person name="Mann M."/>
        </authorList>
    </citation>
    <scope>ACETYLATION [LARGE SCALE ANALYSIS] AT LYS-53 AND LYS-109</scope>
    <scope>IDENTIFICATION BY MASS SPECTROMETRY [LARGE SCALE ANALYSIS]</scope>
</reference>
<reference key="24">
    <citation type="journal article" date="2011" name="BMC Syst. Biol.">
        <title>Initial characterization of the human central proteome.</title>
        <authorList>
            <person name="Burkard T.R."/>
            <person name="Planyavsky M."/>
            <person name="Kaupe I."/>
            <person name="Breitwieser F.P."/>
            <person name="Buerckstuemmer T."/>
            <person name="Bennett K.L."/>
            <person name="Superti-Furga G."/>
            <person name="Colinge J."/>
        </authorList>
    </citation>
    <scope>IDENTIFICATION BY MASS SPECTROMETRY [LARGE SCALE ANALYSIS]</scope>
</reference>
<reference key="25">
    <citation type="journal article" date="2000" name="Mol. Genet. Metab.">
        <title>Complex association analysis of Graves disease using a set of polymorphic markers.</title>
        <authorList>
            <person name="Chistyakov D.A."/>
            <person name="Savost'anov K.V."/>
            <person name="Turakulov R.I."/>
            <person name="Petunina N.A."/>
            <person name="Trukhina L.V."/>
            <person name="Kudinova A.V."/>
            <person name="Balabolkin M.I."/>
            <person name="Nosikov V.V."/>
        </authorList>
    </citation>
    <scope>VARIANT HIS-60</scope>
</reference>
<reference key="26">
    <citation type="journal article" date="2015" name="J. Clin. Invest.">
        <title>Additive loss-of-function proteasome subunit mutations in CANDLE/PRAAS patients promote type I IFN production.</title>
        <authorList>
            <person name="Brehm A."/>
            <person name="Liu Y."/>
            <person name="Sheikh A."/>
            <person name="Marrero B."/>
            <person name="Omoyinmi E."/>
            <person name="Zhou Q."/>
            <person name="Montealegre G."/>
            <person name="Biancotto A."/>
            <person name="Reinhardt A."/>
            <person name="Almeida de Jesus A."/>
            <person name="Pelletier M."/>
            <person name="Tsai W.L."/>
            <person name="Remmers E.F."/>
            <person name="Kardava L."/>
            <person name="Hill S."/>
            <person name="Kim H."/>
            <person name="Lachmann H.J."/>
            <person name="Megarbane A."/>
            <person name="Chae J.J."/>
            <person name="Brady J."/>
            <person name="Castillo R.D."/>
            <person name="Brown D."/>
            <person name="Casano A.V."/>
            <person name="Gao L."/>
            <person name="Chapelle D."/>
            <person name="Huang Y."/>
            <person name="Stone D."/>
            <person name="Chen Y."/>
            <person name="Sotzny F."/>
            <person name="Lee C.C."/>
            <person name="Kastner D.L."/>
            <person name="Torrelo A."/>
            <person name="Zlotogorski A."/>
            <person name="Moir S."/>
            <person name="Gadina M."/>
            <person name="McCoy P."/>
            <person name="Wesley R."/>
            <person name="Rother K.I."/>
            <person name="Hildebrand P.W."/>
            <person name="Brogan P."/>
            <person name="Krueger E."/>
            <person name="Aksentijevich I."/>
            <person name="Goldbach-Mansky R."/>
        </authorList>
    </citation>
    <scope>VARIANT PRAAS3 ASP-165</scope>
    <scope>CHARACTERIZATION OF VARIANT PRAAS3 ASP-165</scope>
</reference>
<reference key="27">
    <citation type="journal article" date="2016" name="J. Clin. Invest.">
        <authorList>
            <person name="Brehm A."/>
            <person name="Liu Y."/>
            <person name="Sheikh A."/>
            <person name="Marrero B."/>
            <person name="Omoyinmi E."/>
            <person name="Zhou Q."/>
            <person name="Montealegre G."/>
            <person name="Biancotto A."/>
            <person name="Reinhardt A."/>
            <person name="de Jesus A.A."/>
            <person name="Pelletier M."/>
            <person name="Tsai W.L."/>
            <person name="Remmers E.F."/>
            <person name="Kardava L."/>
            <person name="Hill S."/>
            <person name="Kim H."/>
            <person name="Lachmann H.J."/>
            <person name="Megarbane A."/>
            <person name="Chae J.J."/>
            <person name="Brady J."/>
            <person name="Castillo R.D."/>
            <person name="Brown D."/>
            <person name="Casano A.V."/>
            <person name="Gao L."/>
            <person name="Chapelle D."/>
            <person name="Huang Y."/>
            <person name="Stone D."/>
            <person name="Chen Y."/>
            <person name="Sotzny F."/>
            <person name="Lee C.C."/>
            <person name="Kastner D.L."/>
            <person name="Torrelo A."/>
            <person name="Zlotogorski A."/>
            <person name="Moir S."/>
            <person name="Gadina M."/>
            <person name="McCoy P."/>
            <person name="Wesley R."/>
            <person name="Rother K.I."/>
            <person name="Hildebrand P.W."/>
            <person name="Brogan P."/>
            <person name="Krueger E."/>
            <person name="Aksentijevich I."/>
            <person name="Goldbach-Mansky R."/>
        </authorList>
    </citation>
    <scope>ERRATUM OF PUBMED:26524591</scope>
</reference>
<reference key="28">
    <citation type="journal article" date="2021" name="J. Allergy Clin. Immunol.">
        <title>Successful treatment of a novel type I interferonopathy due to a de novo PSMB9 gene mutation with a Janus kinase inhibitor.</title>
        <authorList>
            <person name="Kataoka S."/>
            <person name="Kawashima N."/>
            <person name="Okuno Y."/>
            <person name="Muramatsu H."/>
            <person name="Miwata S."/>
            <person name="Narita K."/>
            <person name="Hamada M."/>
            <person name="Murakami N."/>
            <person name="Taniguchi R."/>
            <person name="Ichikawa D."/>
            <person name="Kitazawa H."/>
            <person name="Suzuki K."/>
            <person name="Nishikawa E."/>
            <person name="Narita A."/>
            <person name="Nishio N."/>
            <person name="Yamamoto H."/>
            <person name="Fukasawa Y."/>
            <person name="Kato T."/>
            <person name="Yamamoto H."/>
            <person name="Natsume J."/>
            <person name="Kojima S."/>
            <person name="Nishino I."/>
            <person name="Taketani T."/>
            <person name="Ohnishi H."/>
            <person name="Takahashi Y."/>
        </authorList>
    </citation>
    <scope>INVOLVEMENT IN PRAAS6</scope>
    <scope>VARIANT PRAAS6 ASP-156</scope>
    <scope>CHARACTERIZATION OF VARIANT PRAAS6 ASP-156</scope>
    <scope>FUNCTION</scope>
</reference>
<reference key="29">
    <citation type="journal article" date="2021" name="Nat. Commun.">
        <title>Heterozygous missense variant of the proteasome subunit beta-type 9 causes neonatal-onset autoinflammation and immunodeficiency.</title>
        <authorList>
            <person name="Kanazawa N."/>
            <person name="Hemmi H."/>
            <person name="Kinjo N."/>
            <person name="Ohnishi H."/>
            <person name="Hamazaki J."/>
            <person name="Mishima H."/>
            <person name="Kinoshita A."/>
            <person name="Mizushima T."/>
            <person name="Hamada S."/>
            <person name="Hamada K."/>
            <person name="Kawamoto N."/>
            <person name="Kadowaki S."/>
            <person name="Honda Y."/>
            <person name="Izawa K."/>
            <person name="Nishikomori R."/>
            <person name="Tsumura M."/>
            <person name="Yamashita Y."/>
            <person name="Tamura S."/>
            <person name="Orimo T."/>
            <person name="Ozasa T."/>
            <person name="Kato T."/>
            <person name="Sasaki I."/>
            <person name="Fukuda-Ohta Y."/>
            <person name="Wakaki-Nishiyama N."/>
            <person name="Inaba Y."/>
            <person name="Kunimoto K."/>
            <person name="Okada S."/>
            <person name="Taketani T."/>
            <person name="Nakanishi K."/>
            <person name="Murata S."/>
            <person name="Yoshiura K.I."/>
            <person name="Kaisho T."/>
        </authorList>
    </citation>
    <scope>INVOLVEMENT IN PRAAS6</scope>
    <scope>VARIANT PRAAS6 ASP-156</scope>
    <scope>CHARACTERIZATION OF VARIANT PRAAS6 ASP-156</scope>
    <scope>FUNCTION</scope>
</reference>
<protein>
    <recommendedName>
        <fullName>Proteasome subunit beta type-9</fullName>
        <ecNumber>3.4.25.1</ecNumber>
    </recommendedName>
    <alternativeName>
        <fullName>Low molecular mass protein 2</fullName>
    </alternativeName>
    <alternativeName>
        <fullName>Macropain chain 7</fullName>
    </alternativeName>
    <alternativeName>
        <fullName>Multicatalytic endopeptidase complex chain 7</fullName>
    </alternativeName>
    <alternativeName>
        <fullName>Proteasome chain 7</fullName>
    </alternativeName>
    <alternativeName>
        <fullName>Proteasome subunit beta-1i</fullName>
    </alternativeName>
    <alternativeName>
        <fullName>Really interesting new gene 12 protein</fullName>
    </alternativeName>
</protein>
<evidence type="ECO:0000250" key="1"/>
<evidence type="ECO:0000250" key="2">
    <source>
        <dbReference type="UniProtKB" id="O35955"/>
    </source>
</evidence>
<evidence type="ECO:0000255" key="3">
    <source>
        <dbReference type="PROSITE-ProRule" id="PRU00809"/>
    </source>
</evidence>
<evidence type="ECO:0000269" key="4">
    <source>
    </source>
</evidence>
<evidence type="ECO:0000269" key="5">
    <source>
    </source>
</evidence>
<evidence type="ECO:0000269" key="6">
    <source>
    </source>
</evidence>
<evidence type="ECO:0000269" key="7">
    <source>
    </source>
</evidence>
<evidence type="ECO:0000269" key="8">
    <source>
    </source>
</evidence>
<evidence type="ECO:0000269" key="9">
    <source>
    </source>
</evidence>
<evidence type="ECO:0000269" key="10">
    <source>
    </source>
</evidence>
<evidence type="ECO:0000269" key="11">
    <source>
    </source>
</evidence>
<evidence type="ECO:0000269" key="12">
    <source>
    </source>
</evidence>
<evidence type="ECO:0000269" key="13">
    <source>
    </source>
</evidence>
<evidence type="ECO:0000269" key="14">
    <source>
    </source>
</evidence>
<evidence type="ECO:0000269" key="15">
    <source>
    </source>
</evidence>
<evidence type="ECO:0000269" key="16">
    <source>
    </source>
</evidence>
<evidence type="ECO:0000269" key="17">
    <source>
    </source>
</evidence>
<evidence type="ECO:0000269" key="18">
    <source>
    </source>
</evidence>
<evidence type="ECO:0000269" key="19">
    <source>
    </source>
</evidence>
<evidence type="ECO:0000269" key="20">
    <source>
    </source>
</evidence>
<evidence type="ECO:0000303" key="21">
    <source>
    </source>
</evidence>
<evidence type="ECO:0007744" key="22">
    <source>
    </source>
</evidence>
<evidence type="ECO:0007829" key="23">
    <source>
        <dbReference type="PDB" id="6E5B"/>
    </source>
</evidence>
<evidence type="ECO:0007829" key="24">
    <source>
        <dbReference type="PDB" id="7AWE"/>
    </source>
</evidence>
<evidence type="ECO:0007829" key="25">
    <source>
        <dbReference type="PDB" id="7B12"/>
    </source>
</evidence>
<comment type="function">
    <text evidence="16 17 18">The proteasome is a multicatalytic proteinase complex which is characterized by its ability to cleave peptides with Arg, Phe, Tyr, Leu, and Glu adjacent to the leaving group at neutral or slightly basic pH (PubMed:33727065, PubMed:34819510). The proteasome has an ATP-dependent proteolytic activity. This subunit is involved in antigen processing to generate class I binding peptides. Replacement of PSMB6 by PSMB9 increases the capacity of the immunoproteasome to cleave model peptides after hydrophobic and basic residues.</text>
</comment>
<comment type="catalytic activity">
    <reaction>
        <text>Cleavage of peptide bonds with very broad specificity.</text>
        <dbReference type="EC" id="3.4.25.1"/>
    </reaction>
</comment>
<comment type="subunit">
    <text evidence="10">The 26S proteasome consists of a 20S proteasome core and two 19S regulatory subunits. The 20S proteasome core is composed of 28 subunits that are arranged in four stacked rings, resulting in a barrel-shaped structure. The two end rings are each formed by seven alpha subunits, and the two central rings are each formed by seven beta subunits. The catalytic chamber with the active sites is on the inside of the barrel. Component of the immunoproteasome, where it displaces the equivalent housekeeping subunit PSMB6. Component of the spermatoproteasome, a form of the proteasome specifically found in testis.</text>
</comment>
<comment type="subunit">
    <text evidence="7">(Microbial infection) Interacts with HIV-1 TAT protein.</text>
</comment>
<comment type="interaction">
    <interactant intactId="EBI-603300">
        <id>P28065</id>
    </interactant>
    <interactant intactId="EBI-10239205">
        <id>Q24JT5</id>
        <label>CRYGA</label>
    </interactant>
    <organismsDiffer>false</organismsDiffer>
    <experiments>3</experiments>
</comment>
<comment type="interaction">
    <interactant intactId="EBI-603300">
        <id>P28065</id>
    </interactant>
    <interactant intactId="EBI-742054">
        <id>Q96D03</id>
        <label>DDIT4L</label>
    </interactant>
    <organismsDiffer>false</organismsDiffer>
    <experiments>3</experiments>
</comment>
<comment type="interaction">
    <interactant intactId="EBI-603300">
        <id>P28065</id>
    </interactant>
    <interactant intactId="EBI-5349621">
        <id>Q9Y3R0</id>
        <label>GRIP1</label>
    </interactant>
    <organismsDiffer>false</organismsDiffer>
    <experiments>3</experiments>
</comment>
<comment type="interaction">
    <interactant intactId="EBI-603300">
        <id>P28065</id>
    </interactant>
    <interactant intactId="EBI-1052105">
        <id>Q14657</id>
        <label>LAGE3</label>
    </interactant>
    <organismsDiffer>false</organismsDiffer>
    <experiments>4</experiments>
</comment>
<comment type="interaction">
    <interactant intactId="EBI-603300">
        <id>P28065</id>
    </interactant>
    <interactant intactId="EBI-455189">
        <id>Q15788</id>
        <label>NCOA1</label>
    </interactant>
    <organismsDiffer>false</organismsDiffer>
    <experiments>3</experiments>
</comment>
<comment type="interaction">
    <interactant intactId="EBI-603300">
        <id>P28065</id>
    </interactant>
    <interactant intactId="EBI-81196">
        <id>Q9Y6Q9</id>
        <label>NCOA3</label>
    </interactant>
    <organismsDiffer>false</organismsDiffer>
    <experiments>3</experiments>
</comment>
<comment type="interaction">
    <interactant intactId="EBI-603300">
        <id>P28065</id>
    </interactant>
    <interactant intactId="EBI-696895">
        <id>Q9Y244</id>
        <label>POMP</label>
    </interactant>
    <organismsDiffer>false</organismsDiffer>
    <experiments>6</experiments>
</comment>
<comment type="interaction">
    <interactant intactId="EBI-603300">
        <id>P28065</id>
    </interactant>
    <interactant intactId="EBI-603319">
        <id>Q99436</id>
        <label>PSMB7</label>
    </interactant>
    <organismsDiffer>false</organismsDiffer>
    <experiments>10</experiments>
</comment>
<comment type="interaction">
    <interactant intactId="EBI-603300">
        <id>P28065</id>
    </interactant>
    <interactant intactId="EBI-6863741">
        <id>PRO_0000037548</id>
        <dbReference type="UniProtKB" id="Q9WMX2"/>
    </interactant>
    <organismsDiffer>true</organismsDiffer>
    <experiments>2</experiments>
</comment>
<comment type="interaction">
    <interactant intactId="EBI-603300">
        <id>P28065</id>
    </interactant>
    <interactant intactId="EBI-6863748">
        <id>PRO_0000037551</id>
        <dbReference type="UniProtKB" id="Q9WMX2"/>
    </interactant>
    <organismsDiffer>true</organismsDiffer>
    <experiments>2</experiments>
</comment>
<comment type="subcellular location">
    <subcellularLocation>
        <location evidence="3">Cytoplasm</location>
    </subcellularLocation>
    <subcellularLocation>
        <location evidence="1">Nucleus</location>
    </subcellularLocation>
</comment>
<comment type="alternative products">
    <event type="alternative splicing"/>
    <isoform>
        <id>P28065-1</id>
        <name>LMP2.L</name>
        <sequence type="displayed"/>
    </isoform>
    <isoform>
        <id>P28065-2</id>
        <name>LMP2.S</name>
        <sequence type="described" ref="VSP_005288"/>
    </isoform>
</comment>
<comment type="developmental stage">
    <text evidence="6">Highly expressed in immature dendritic cells (at protein level).</text>
</comment>
<comment type="induction">
    <text evidence="5 8 9 11 12 13 19">Up-regulated by interferon gamma (at protein level). Up-regulated by IRF1. Up-regulated by tumor necrosis factor-alpha (at protein level). Up-regulated by tetrodotoxin (TTX) in glial cells. Up-regulated in Crohn's bowel disease (CD). Up-regulated by heat shock treatment. Up-regulated by CD40L via the NFKB1 pathway in cancer cells.</text>
</comment>
<comment type="PTM">
    <text evidence="2">Autocleaved. The resulting N-terminal Thr residue of the mature subunit is responsible for the nucleophile proteolytic activity.</text>
</comment>
<comment type="disease" evidence="15">
    <disease id="DI-05286">
        <name>Proteasome-associated autoinflammatory syndrome 3</name>
        <acronym>PRAAS3</acronym>
        <description>An autoinflammatory disorder characterized by onset in early infancy and recurrent fever, nodular dermatitis, myositis, panniculitis-induced lipodystrophy, lymphadenopathy, and immune dysregulation. Variable accompanying features may include joint contractures, hepatosplenomegaly, anemia, thrombocytopenia, recurrent infections, autoantibodies, and hypergammaglobulinemia. Some patients may have intracranial calcifications. PRAAS3 inheritance is autosomal recessive or digenic.</description>
        <dbReference type="MIM" id="617591"/>
    </disease>
    <text>The disease may be caused by variants affecting distinct genetic loci, including the gene represented in this entry.</text>
</comment>
<comment type="disease" evidence="16 17">
    <disease id="DI-06890">
        <name>Proteasome-associated autoinflammatory syndrome 6</name>
        <acronym>PRAAS6</acronym>
        <description>An autosomal dominant, autoinflammatory disorder characterized by recurrent fever, skin rash, myositis, liver dysfunction, splenomegaly, pulmonary hypertension, and basal ganglia calcifications. Disease onset is in early infancy.</description>
        <dbReference type="MIM" id="620796"/>
    </disease>
    <text>The disease is caused by variants affecting the gene represented in this entry.</text>
</comment>
<comment type="miscellaneous">
    <text>Encoded in the MHC class II region.</text>
</comment>
<comment type="miscellaneous">
    <text>A model for self-activation in which residue Thr-21 serves as nucleophile and Lys-53 as proton donor/acceptor has been proposed. Subunit processing of mammalian beta-subunits proceeds via a novel ordered two-step mechanism involving autocatalysis.</text>
</comment>
<comment type="similarity">
    <text evidence="3">Belongs to the peptidase T1B family.</text>
</comment>
<sequence length="219" mass="23264">MLRAGAPTGDLPRAGEVHTGTTIMAVEFDGGVVMGSDSRVSAGEAVVNRVFDKLSPLHERIYCALSGSAADAQAVADMAAYQLELHGIELEEPPLVLAAANVVRNISYKYREDLSAHLMVAGWDQREGGQVYGTLGGMLTRQPFAIGGSGSTFIYGYVDAAYKPGMSPEECRRFTTDAIALAMSRDGSSGGVIYLVTITAAGVDHRVILGNELPKFYDE</sequence>
<gene>
    <name type="primary">PSMB9</name>
    <name type="synonym">LMP2</name>
    <name type="synonym">PSMB6i</name>
    <name type="synonym">RING12</name>
</gene>
<proteinExistence type="evidence at protein level"/>
<keyword id="KW-0002">3D-structure</keyword>
<keyword id="KW-0007">Acetylation</keyword>
<keyword id="KW-0025">Alternative splicing</keyword>
<keyword id="KW-0963">Cytoplasm</keyword>
<keyword id="KW-0225">Disease variant</keyword>
<keyword id="KW-0945">Host-virus interaction</keyword>
<keyword id="KW-0378">Hydrolase</keyword>
<keyword id="KW-0391">Immunity</keyword>
<keyword id="KW-0539">Nucleus</keyword>
<keyword id="KW-0645">Protease</keyword>
<keyword id="KW-0647">Proteasome</keyword>
<keyword id="KW-1267">Proteomics identification</keyword>
<keyword id="KW-1185">Reference proteome</keyword>
<keyword id="KW-0888">Threonine protease</keyword>
<keyword id="KW-0865">Zymogen</keyword>
<name>PSB9_HUMAN</name>
<feature type="propeptide" id="PRO_0000026619" description="Removed in mature form">
    <location>
        <begin position="1"/>
        <end position="20"/>
    </location>
</feature>
<feature type="chain" id="PRO_0000026620" description="Proteasome subunit beta type-9">
    <location>
        <begin position="21"/>
        <end position="219"/>
    </location>
</feature>
<feature type="active site" description="Nucleophile">
    <location>
        <position position="21"/>
    </location>
</feature>
<feature type="site" description="Cleavage; by autolysis" evidence="2">
    <location>
        <begin position="20"/>
        <end position="21"/>
    </location>
</feature>
<feature type="modified residue" description="N6-acetyllysine" evidence="22">
    <location>
        <position position="53"/>
    </location>
</feature>
<feature type="modified residue" description="N6-acetyllysine" evidence="22">
    <location>
        <position position="109"/>
    </location>
</feature>
<feature type="splice variant" id="VSP_005288" description="In isoform LMP2.S." evidence="21">
    <location>
        <begin position="4"/>
        <end position="13"/>
    </location>
</feature>
<feature type="sequence variant" id="VAR_051551" description="In dbSNP:rs35100697.">
    <original>G</original>
    <variation>E</variation>
    <location>
        <position position="9"/>
    </location>
</feature>
<feature type="sequence variant" id="VAR_051552" description="In dbSNP:rs241419.">
    <original>V</original>
    <variation>I</variation>
    <location>
        <position position="32"/>
    </location>
</feature>
<feature type="sequence variant" id="VAR_013578" description="In dbSNP:rs17587." evidence="4 14">
    <original>R</original>
    <variation>H</variation>
    <location>
        <position position="60"/>
    </location>
</feature>
<feature type="sequence variant" id="VAR_089542" description="In PRAAS6; pathogenic; loss of most of the chymotrypsin-like, trypsin-like and caspase-like proteasomal activities, when tested in patient lymphoblastoid cells, compared to parent cells; may affect proteasome assembly." evidence="16 17">
    <original>G</original>
    <variation>D</variation>
    <location>
        <position position="156"/>
    </location>
</feature>
<feature type="sequence variant" id="VAR_075258" description="In PRAAS3; digenic inheritance; patient also carries a mutation in PSMB4; patients' cells show reduction of proteasome content and cysteine-type endopeptidase activity of the proteasome; dbSNP:rs369359789." evidence="15">
    <original>G</original>
    <variation>D</variation>
    <location>
        <position position="165"/>
    </location>
</feature>
<feature type="sequence variant" id="VAR_051553" description="In dbSNP:rs17213861.">
    <original>R</original>
    <variation>C</variation>
    <location>
        <position position="173"/>
    </location>
</feature>
<feature type="mutagenesis site" description="Impairs correct processing at the consensus site." evidence="20">
    <original>G</original>
    <variation>A</variation>
    <location>
        <position position="20"/>
    </location>
</feature>
<feature type="mutagenesis site" description="Impairs correct processing at the consensus site." evidence="20">
    <original>T</original>
    <variation>A</variation>
    <location>
        <position position="21"/>
    </location>
</feature>
<feature type="mutagenesis site" description="Impairs correct processing at the consensus site." evidence="20">
    <original>K</original>
    <variation>A</variation>
    <location>
        <position position="53"/>
    </location>
</feature>
<feature type="strand" evidence="24">
    <location>
        <begin position="23"/>
        <end position="28"/>
    </location>
</feature>
<feature type="strand" evidence="24">
    <location>
        <begin position="31"/>
        <end position="36"/>
    </location>
</feature>
<feature type="strand" evidence="24">
    <location>
        <begin position="40"/>
        <end position="42"/>
    </location>
</feature>
<feature type="strand" evidence="24">
    <location>
        <begin position="45"/>
        <end position="50"/>
    </location>
</feature>
<feature type="strand" evidence="24">
    <location>
        <begin position="54"/>
        <end position="58"/>
    </location>
</feature>
<feature type="strand" evidence="24">
    <location>
        <begin position="61"/>
        <end position="64"/>
    </location>
</feature>
<feature type="helix" evidence="24">
    <location>
        <begin position="69"/>
        <end position="89"/>
    </location>
</feature>
<feature type="helix" evidence="24">
    <location>
        <begin position="96"/>
        <end position="109"/>
    </location>
</feature>
<feature type="turn" evidence="24">
    <location>
        <begin position="110"/>
        <end position="113"/>
    </location>
</feature>
<feature type="strand" evidence="24">
    <location>
        <begin position="119"/>
        <end position="124"/>
    </location>
</feature>
<feature type="turn" evidence="24">
    <location>
        <begin position="125"/>
        <end position="127"/>
    </location>
</feature>
<feature type="strand" evidence="24">
    <location>
        <begin position="128"/>
        <end position="133"/>
    </location>
</feature>
<feature type="helix" evidence="24">
    <location>
        <begin position="135"/>
        <end position="137"/>
    </location>
</feature>
<feature type="strand" evidence="24">
    <location>
        <begin position="143"/>
        <end position="148"/>
    </location>
</feature>
<feature type="helix" evidence="24">
    <location>
        <begin position="149"/>
        <end position="154"/>
    </location>
</feature>
<feature type="helix" evidence="24">
    <location>
        <begin position="155"/>
        <end position="161"/>
    </location>
</feature>
<feature type="helix" evidence="24">
    <location>
        <begin position="168"/>
        <end position="185"/>
    </location>
</feature>
<feature type="strand" evidence="23">
    <location>
        <begin position="186"/>
        <end position="188"/>
    </location>
</feature>
<feature type="strand" evidence="24">
    <location>
        <begin position="193"/>
        <end position="199"/>
    </location>
</feature>
<feature type="strand" evidence="24">
    <location>
        <begin position="202"/>
        <end position="208"/>
    </location>
</feature>
<feature type="turn" evidence="25">
    <location>
        <begin position="210"/>
        <end position="212"/>
    </location>
</feature>